<organism>
    <name type="scientific">Schizosaccharomyces pombe (strain 972 / ATCC 24843)</name>
    <name type="common">Fission yeast</name>
    <dbReference type="NCBI Taxonomy" id="284812"/>
    <lineage>
        <taxon>Eukaryota</taxon>
        <taxon>Fungi</taxon>
        <taxon>Dikarya</taxon>
        <taxon>Ascomycota</taxon>
        <taxon>Taphrinomycotina</taxon>
        <taxon>Schizosaccharomycetes</taxon>
        <taxon>Schizosaccharomycetales</taxon>
        <taxon>Schizosaccharomycetaceae</taxon>
        <taxon>Schizosaccharomyces</taxon>
    </lineage>
</organism>
<keyword id="KW-0472">Membrane</keyword>
<keyword id="KW-1185">Reference proteome</keyword>
<keyword id="KW-0812">Transmembrane</keyword>
<keyword id="KW-1133">Transmembrane helix</keyword>
<protein>
    <recommendedName>
        <fullName>UPF0220 protein C8D2.02c</fullName>
    </recommendedName>
</protein>
<dbReference type="EMBL" id="AB004538">
    <property type="protein sequence ID" value="BAA21443.1"/>
    <property type="status" value="ALT_SEQ"/>
    <property type="molecule type" value="Genomic_DNA"/>
</dbReference>
<dbReference type="EMBL" id="CU329671">
    <property type="protein sequence ID" value="CAA17817.1"/>
    <property type="molecule type" value="Genomic_DNA"/>
</dbReference>
<dbReference type="PIR" id="T40747">
    <property type="entry name" value="T40747"/>
</dbReference>
<dbReference type="RefSeq" id="NP_595565.1">
    <property type="nucleotide sequence ID" value="NM_001021460.2"/>
</dbReference>
<dbReference type="BioGRID" id="277758">
    <property type="interactions" value="14"/>
</dbReference>
<dbReference type="FunCoup" id="O43073">
    <property type="interactions" value="78"/>
</dbReference>
<dbReference type="STRING" id="284812.O43073"/>
<dbReference type="TCDB" id="9.B.199.1.5">
    <property type="family name" value="the 4 tms pf05225 (pf0225) family"/>
</dbReference>
<dbReference type="iPTMnet" id="O43073"/>
<dbReference type="PaxDb" id="4896-SPBC8D2.02c.1"/>
<dbReference type="EnsemblFungi" id="SPBC8D2.02c.1">
    <property type="protein sequence ID" value="SPBC8D2.02c.1:pep"/>
    <property type="gene ID" value="SPBC8D2.02c"/>
</dbReference>
<dbReference type="PomBase" id="SPBC8D2.02c"/>
<dbReference type="VEuPathDB" id="FungiDB:SPBC8D2.02c"/>
<dbReference type="eggNOG" id="KOG3393">
    <property type="taxonomic scope" value="Eukaryota"/>
</dbReference>
<dbReference type="HOGENOM" id="CLU_096876_0_0_1"/>
<dbReference type="InParanoid" id="O43073"/>
<dbReference type="OMA" id="VHITFVD"/>
<dbReference type="PhylomeDB" id="O43073"/>
<dbReference type="PRO" id="PR:O43073"/>
<dbReference type="Proteomes" id="UP000002485">
    <property type="component" value="Chromosome II"/>
</dbReference>
<dbReference type="GO" id="GO:0000329">
    <property type="term" value="C:fungal-type vacuole membrane"/>
    <property type="evidence" value="ECO:0007005"/>
    <property type="project" value="PomBase"/>
</dbReference>
<dbReference type="GO" id="GO:0005794">
    <property type="term" value="C:Golgi apparatus"/>
    <property type="evidence" value="ECO:0007005"/>
    <property type="project" value="PomBase"/>
</dbReference>
<dbReference type="GO" id="GO:0034424">
    <property type="term" value="C:Vps55/Vps68 complex"/>
    <property type="evidence" value="ECO:0000318"/>
    <property type="project" value="GO_Central"/>
</dbReference>
<dbReference type="GO" id="GO:0032511">
    <property type="term" value="P:late endosome to vacuole transport via multivesicular body sorting pathway"/>
    <property type="evidence" value="ECO:0000318"/>
    <property type="project" value="GO_Central"/>
</dbReference>
<dbReference type="InterPro" id="IPR007919">
    <property type="entry name" value="UPF0220"/>
</dbReference>
<dbReference type="PANTHER" id="PTHR13180">
    <property type="entry name" value="SMALL MEMBRANE PROTEIN-RELATED"/>
    <property type="match status" value="1"/>
</dbReference>
<dbReference type="Pfam" id="PF05255">
    <property type="entry name" value="UPF0220"/>
    <property type="match status" value="1"/>
</dbReference>
<feature type="chain" id="PRO_0000174186" description="UPF0220 protein C8D2.02c">
    <location>
        <begin position="1"/>
        <end position="170"/>
    </location>
</feature>
<feature type="transmembrane region" description="Helical" evidence="1">
    <location>
        <begin position="23"/>
        <end position="43"/>
    </location>
</feature>
<feature type="transmembrane region" description="Helical" evidence="1">
    <location>
        <begin position="54"/>
        <end position="74"/>
    </location>
</feature>
<feature type="transmembrane region" description="Helical" evidence="1">
    <location>
        <begin position="101"/>
        <end position="121"/>
    </location>
</feature>
<feature type="transmembrane region" description="Helical" evidence="1">
    <location>
        <begin position="136"/>
        <end position="156"/>
    </location>
</feature>
<accession>O43073</accession>
<accession>O13653</accession>
<evidence type="ECO:0000255" key="1"/>
<evidence type="ECO:0000305" key="2"/>
<name>YGW2_SCHPO</name>
<sequence length="170" mass="18816">MTLLDSSIFRFRLSSLHVSSRSLGVYFAGIMFASAVWVFVDAALYSAFDYARNLHITFIDWIPFLCSILGIVIVNSIDKSRLSGDSFAYTDESLARKARFILFIGFALLAGGLGGSFTVFILKYVVAGYEGKSLLMGSANIISNILFMISATALWITGNMNDDYHYNLQL</sequence>
<reference key="1">
    <citation type="journal article" date="2000" name="Yeast">
        <title>A 38 kb segment containing the cdc2 gene from the left arm of fission yeast chromosome II: sequence analysis and characterization of the genomic DNA and cDNAs encoded on the segment.</title>
        <authorList>
            <person name="Machida M."/>
            <person name="Yamazaki S."/>
            <person name="Kunihiro S."/>
            <person name="Tanaka T."/>
            <person name="Kushida N."/>
            <person name="Jinno K."/>
            <person name="Haikawa Y."/>
            <person name="Yamazaki J."/>
            <person name="Yamamoto S."/>
            <person name="Sekine M."/>
            <person name="Oguchi A."/>
            <person name="Nagai Y."/>
            <person name="Sakai M."/>
            <person name="Aoki K."/>
            <person name="Ogura K."/>
            <person name="Kudoh Y."/>
            <person name="Kikuchi H."/>
            <person name="Zhang M.Q."/>
            <person name="Yanagida M."/>
        </authorList>
    </citation>
    <scope>NUCLEOTIDE SEQUENCE [LARGE SCALE GENOMIC DNA]</scope>
    <source>
        <strain>972 / ATCC 24843</strain>
    </source>
</reference>
<reference key="2">
    <citation type="journal article" date="2002" name="Nature">
        <title>The genome sequence of Schizosaccharomyces pombe.</title>
        <authorList>
            <person name="Wood V."/>
            <person name="Gwilliam R."/>
            <person name="Rajandream M.A."/>
            <person name="Lyne M.H."/>
            <person name="Lyne R."/>
            <person name="Stewart A."/>
            <person name="Sgouros J.G."/>
            <person name="Peat N."/>
            <person name="Hayles J."/>
            <person name="Baker S.G."/>
            <person name="Basham D."/>
            <person name="Bowman S."/>
            <person name="Brooks K."/>
            <person name="Brown D."/>
            <person name="Brown S."/>
            <person name="Chillingworth T."/>
            <person name="Churcher C.M."/>
            <person name="Collins M."/>
            <person name="Connor R."/>
            <person name="Cronin A."/>
            <person name="Davis P."/>
            <person name="Feltwell T."/>
            <person name="Fraser A."/>
            <person name="Gentles S."/>
            <person name="Goble A."/>
            <person name="Hamlin N."/>
            <person name="Harris D.E."/>
            <person name="Hidalgo J."/>
            <person name="Hodgson G."/>
            <person name="Holroyd S."/>
            <person name="Hornsby T."/>
            <person name="Howarth S."/>
            <person name="Huckle E.J."/>
            <person name="Hunt S."/>
            <person name="Jagels K."/>
            <person name="James K.D."/>
            <person name="Jones L."/>
            <person name="Jones M."/>
            <person name="Leather S."/>
            <person name="McDonald S."/>
            <person name="McLean J."/>
            <person name="Mooney P."/>
            <person name="Moule S."/>
            <person name="Mungall K.L."/>
            <person name="Murphy L.D."/>
            <person name="Niblett D."/>
            <person name="Odell C."/>
            <person name="Oliver K."/>
            <person name="O'Neil S."/>
            <person name="Pearson D."/>
            <person name="Quail M.A."/>
            <person name="Rabbinowitsch E."/>
            <person name="Rutherford K.M."/>
            <person name="Rutter S."/>
            <person name="Saunders D."/>
            <person name="Seeger K."/>
            <person name="Sharp S."/>
            <person name="Skelton J."/>
            <person name="Simmonds M.N."/>
            <person name="Squares R."/>
            <person name="Squares S."/>
            <person name="Stevens K."/>
            <person name="Taylor K."/>
            <person name="Taylor R.G."/>
            <person name="Tivey A."/>
            <person name="Walsh S.V."/>
            <person name="Warren T."/>
            <person name="Whitehead S."/>
            <person name="Woodward J.R."/>
            <person name="Volckaert G."/>
            <person name="Aert R."/>
            <person name="Robben J."/>
            <person name="Grymonprez B."/>
            <person name="Weltjens I."/>
            <person name="Vanstreels E."/>
            <person name="Rieger M."/>
            <person name="Schaefer M."/>
            <person name="Mueller-Auer S."/>
            <person name="Gabel C."/>
            <person name="Fuchs M."/>
            <person name="Duesterhoeft A."/>
            <person name="Fritzc C."/>
            <person name="Holzer E."/>
            <person name="Moestl D."/>
            <person name="Hilbert H."/>
            <person name="Borzym K."/>
            <person name="Langer I."/>
            <person name="Beck A."/>
            <person name="Lehrach H."/>
            <person name="Reinhardt R."/>
            <person name="Pohl T.M."/>
            <person name="Eger P."/>
            <person name="Zimmermann W."/>
            <person name="Wedler H."/>
            <person name="Wambutt R."/>
            <person name="Purnelle B."/>
            <person name="Goffeau A."/>
            <person name="Cadieu E."/>
            <person name="Dreano S."/>
            <person name="Gloux S."/>
            <person name="Lelaure V."/>
            <person name="Mottier S."/>
            <person name="Galibert F."/>
            <person name="Aves S.J."/>
            <person name="Xiang Z."/>
            <person name="Hunt C."/>
            <person name="Moore K."/>
            <person name="Hurst S.M."/>
            <person name="Lucas M."/>
            <person name="Rochet M."/>
            <person name="Gaillardin C."/>
            <person name="Tallada V.A."/>
            <person name="Garzon A."/>
            <person name="Thode G."/>
            <person name="Daga R.R."/>
            <person name="Cruzado L."/>
            <person name="Jimenez J."/>
            <person name="Sanchez M."/>
            <person name="del Rey F."/>
            <person name="Benito J."/>
            <person name="Dominguez A."/>
            <person name="Revuelta J.L."/>
            <person name="Moreno S."/>
            <person name="Armstrong J."/>
            <person name="Forsburg S.L."/>
            <person name="Cerutti L."/>
            <person name="Lowe T."/>
            <person name="McCombie W.R."/>
            <person name="Paulsen I."/>
            <person name="Potashkin J."/>
            <person name="Shpakovski G.V."/>
            <person name="Ussery D."/>
            <person name="Barrell B.G."/>
            <person name="Nurse P."/>
        </authorList>
    </citation>
    <scope>NUCLEOTIDE SEQUENCE [LARGE SCALE GENOMIC DNA]</scope>
    <source>
        <strain>972 / ATCC 24843</strain>
    </source>
</reference>
<gene>
    <name type="ORF">pi063</name>
    <name type="ORF">SPBC8D2.02c</name>
</gene>
<proteinExistence type="inferred from homology"/>
<comment type="subcellular location">
    <subcellularLocation>
        <location evidence="2">Membrane</location>
        <topology evidence="2">Multi-pass membrane protein</topology>
    </subcellularLocation>
</comment>
<comment type="similarity">
    <text evidence="2">Belongs to the UPF0220 family.</text>
</comment>
<comment type="sequence caution" evidence="2">
    <conflict type="erroneous gene model prediction">
        <sequence resource="EMBL-CDS" id="BAA21443"/>
    </conflict>
</comment>